<proteinExistence type="inferred from homology"/>
<evidence type="ECO:0000255" key="1">
    <source>
        <dbReference type="HAMAP-Rule" id="MF_00580"/>
    </source>
</evidence>
<sequence length="94" mass="10150">MLKPLGDRVILEAKDEEEQTVGGIVLASNAKEKSQTGKIIAVGNGTVLDNGQTVPMNVKVGDTVVYDKYAGTEVSYEDKKYLVVHEKDLVAVVE</sequence>
<feature type="chain" id="PRO_1000025317" description="Co-chaperonin GroES">
    <location>
        <begin position="1"/>
        <end position="94"/>
    </location>
</feature>
<name>CH10_PEDPA</name>
<dbReference type="EMBL" id="CP000422">
    <property type="protein sequence ID" value="ABJ67516.1"/>
    <property type="molecule type" value="Genomic_DNA"/>
</dbReference>
<dbReference type="RefSeq" id="WP_002834471.1">
    <property type="nucleotide sequence ID" value="NC_008525.1"/>
</dbReference>
<dbReference type="SMR" id="Q03H06"/>
<dbReference type="STRING" id="278197.PEPE_0420"/>
<dbReference type="GeneID" id="33062449"/>
<dbReference type="KEGG" id="ppe:PEPE_0420"/>
<dbReference type="eggNOG" id="COG0234">
    <property type="taxonomic scope" value="Bacteria"/>
</dbReference>
<dbReference type="HOGENOM" id="CLU_132825_2_1_9"/>
<dbReference type="OrthoDB" id="9806791at2"/>
<dbReference type="Proteomes" id="UP000000773">
    <property type="component" value="Chromosome"/>
</dbReference>
<dbReference type="GO" id="GO:0005737">
    <property type="term" value="C:cytoplasm"/>
    <property type="evidence" value="ECO:0007669"/>
    <property type="project" value="UniProtKB-SubCell"/>
</dbReference>
<dbReference type="GO" id="GO:0005524">
    <property type="term" value="F:ATP binding"/>
    <property type="evidence" value="ECO:0007669"/>
    <property type="project" value="InterPro"/>
</dbReference>
<dbReference type="GO" id="GO:0046872">
    <property type="term" value="F:metal ion binding"/>
    <property type="evidence" value="ECO:0007669"/>
    <property type="project" value="TreeGrafter"/>
</dbReference>
<dbReference type="GO" id="GO:0044183">
    <property type="term" value="F:protein folding chaperone"/>
    <property type="evidence" value="ECO:0007669"/>
    <property type="project" value="InterPro"/>
</dbReference>
<dbReference type="GO" id="GO:0051087">
    <property type="term" value="F:protein-folding chaperone binding"/>
    <property type="evidence" value="ECO:0007669"/>
    <property type="project" value="TreeGrafter"/>
</dbReference>
<dbReference type="GO" id="GO:0051082">
    <property type="term" value="F:unfolded protein binding"/>
    <property type="evidence" value="ECO:0007669"/>
    <property type="project" value="TreeGrafter"/>
</dbReference>
<dbReference type="GO" id="GO:0051085">
    <property type="term" value="P:chaperone cofactor-dependent protein refolding"/>
    <property type="evidence" value="ECO:0007669"/>
    <property type="project" value="TreeGrafter"/>
</dbReference>
<dbReference type="CDD" id="cd00320">
    <property type="entry name" value="cpn10"/>
    <property type="match status" value="1"/>
</dbReference>
<dbReference type="FunFam" id="2.30.33.40:FF:000001">
    <property type="entry name" value="10 kDa chaperonin"/>
    <property type="match status" value="1"/>
</dbReference>
<dbReference type="Gene3D" id="2.30.33.40">
    <property type="entry name" value="GroES chaperonin"/>
    <property type="match status" value="1"/>
</dbReference>
<dbReference type="HAMAP" id="MF_00580">
    <property type="entry name" value="CH10"/>
    <property type="match status" value="1"/>
</dbReference>
<dbReference type="InterPro" id="IPR020818">
    <property type="entry name" value="Chaperonin_GroES"/>
</dbReference>
<dbReference type="InterPro" id="IPR037124">
    <property type="entry name" value="Chaperonin_GroES_sf"/>
</dbReference>
<dbReference type="InterPro" id="IPR018369">
    <property type="entry name" value="Chaprnonin_Cpn10_CS"/>
</dbReference>
<dbReference type="InterPro" id="IPR011032">
    <property type="entry name" value="GroES-like_sf"/>
</dbReference>
<dbReference type="NCBIfam" id="NF001531">
    <property type="entry name" value="PRK00364.2-2"/>
    <property type="match status" value="1"/>
</dbReference>
<dbReference type="NCBIfam" id="NF001533">
    <property type="entry name" value="PRK00364.2-4"/>
    <property type="match status" value="1"/>
</dbReference>
<dbReference type="NCBIfam" id="NF001534">
    <property type="entry name" value="PRK00364.2-5"/>
    <property type="match status" value="1"/>
</dbReference>
<dbReference type="PANTHER" id="PTHR10772">
    <property type="entry name" value="10 KDA HEAT SHOCK PROTEIN"/>
    <property type="match status" value="1"/>
</dbReference>
<dbReference type="PANTHER" id="PTHR10772:SF58">
    <property type="entry name" value="CO-CHAPERONIN GROES"/>
    <property type="match status" value="1"/>
</dbReference>
<dbReference type="Pfam" id="PF00166">
    <property type="entry name" value="Cpn10"/>
    <property type="match status" value="1"/>
</dbReference>
<dbReference type="PRINTS" id="PR00297">
    <property type="entry name" value="CHAPERONIN10"/>
</dbReference>
<dbReference type="SMART" id="SM00883">
    <property type="entry name" value="Cpn10"/>
    <property type="match status" value="1"/>
</dbReference>
<dbReference type="SUPFAM" id="SSF50129">
    <property type="entry name" value="GroES-like"/>
    <property type="match status" value="1"/>
</dbReference>
<dbReference type="PROSITE" id="PS00681">
    <property type="entry name" value="CHAPERONINS_CPN10"/>
    <property type="match status" value="1"/>
</dbReference>
<accession>Q03H06</accession>
<organism>
    <name type="scientific">Pediococcus pentosaceus (strain ATCC 25745 / CCUG 21536 / LMG 10740 / 183-1w)</name>
    <dbReference type="NCBI Taxonomy" id="278197"/>
    <lineage>
        <taxon>Bacteria</taxon>
        <taxon>Bacillati</taxon>
        <taxon>Bacillota</taxon>
        <taxon>Bacilli</taxon>
        <taxon>Lactobacillales</taxon>
        <taxon>Lactobacillaceae</taxon>
        <taxon>Pediococcus</taxon>
    </lineage>
</organism>
<reference key="1">
    <citation type="journal article" date="2006" name="Proc. Natl. Acad. Sci. U.S.A.">
        <title>Comparative genomics of the lactic acid bacteria.</title>
        <authorList>
            <person name="Makarova K.S."/>
            <person name="Slesarev A."/>
            <person name="Wolf Y.I."/>
            <person name="Sorokin A."/>
            <person name="Mirkin B."/>
            <person name="Koonin E.V."/>
            <person name="Pavlov A."/>
            <person name="Pavlova N."/>
            <person name="Karamychev V."/>
            <person name="Polouchine N."/>
            <person name="Shakhova V."/>
            <person name="Grigoriev I."/>
            <person name="Lou Y."/>
            <person name="Rohksar D."/>
            <person name="Lucas S."/>
            <person name="Huang K."/>
            <person name="Goodstein D.M."/>
            <person name="Hawkins T."/>
            <person name="Plengvidhya V."/>
            <person name="Welker D."/>
            <person name="Hughes J."/>
            <person name="Goh Y."/>
            <person name="Benson A."/>
            <person name="Baldwin K."/>
            <person name="Lee J.-H."/>
            <person name="Diaz-Muniz I."/>
            <person name="Dosti B."/>
            <person name="Smeianov V."/>
            <person name="Wechter W."/>
            <person name="Barabote R."/>
            <person name="Lorca G."/>
            <person name="Altermann E."/>
            <person name="Barrangou R."/>
            <person name="Ganesan B."/>
            <person name="Xie Y."/>
            <person name="Rawsthorne H."/>
            <person name="Tamir D."/>
            <person name="Parker C."/>
            <person name="Breidt F."/>
            <person name="Broadbent J.R."/>
            <person name="Hutkins R."/>
            <person name="O'Sullivan D."/>
            <person name="Steele J."/>
            <person name="Unlu G."/>
            <person name="Saier M.H. Jr."/>
            <person name="Klaenhammer T."/>
            <person name="Richardson P."/>
            <person name="Kozyavkin S."/>
            <person name="Weimer B.C."/>
            <person name="Mills D.A."/>
        </authorList>
    </citation>
    <scope>NUCLEOTIDE SEQUENCE [LARGE SCALE GENOMIC DNA]</scope>
    <source>
        <strain>ATCC 25745 / CCUG 21536 / LMG 10740 / 183-1w</strain>
    </source>
</reference>
<comment type="function">
    <text evidence="1">Together with the chaperonin GroEL, plays an essential role in assisting protein folding. The GroEL-GroES system forms a nano-cage that allows encapsulation of the non-native substrate proteins and provides a physical environment optimized to promote and accelerate protein folding. GroES binds to the apical surface of the GroEL ring, thereby capping the opening of the GroEL channel.</text>
</comment>
<comment type="subunit">
    <text evidence="1">Heptamer of 7 subunits arranged in a ring. Interacts with the chaperonin GroEL.</text>
</comment>
<comment type="subcellular location">
    <subcellularLocation>
        <location evidence="1">Cytoplasm</location>
    </subcellularLocation>
</comment>
<comment type="similarity">
    <text evidence="1">Belongs to the GroES chaperonin family.</text>
</comment>
<gene>
    <name evidence="1" type="primary">groES</name>
    <name evidence="1" type="synonym">groS</name>
    <name type="ordered locus">PEPE_0420</name>
</gene>
<keyword id="KW-0143">Chaperone</keyword>
<keyword id="KW-0963">Cytoplasm</keyword>
<protein>
    <recommendedName>
        <fullName evidence="1">Co-chaperonin GroES</fullName>
    </recommendedName>
    <alternativeName>
        <fullName evidence="1">10 kDa chaperonin</fullName>
    </alternativeName>
    <alternativeName>
        <fullName evidence="1">Chaperonin-10</fullName>
        <shortName evidence="1">Cpn10</shortName>
    </alternativeName>
</protein>